<keyword id="KW-0963">Cytoplasm</keyword>
<keyword id="KW-0903">Direct protein sequencing</keyword>
<keyword id="KW-0597">Phosphoprotein</keyword>
<keyword id="KW-1185">Reference proteome</keyword>
<keyword id="KW-0808">Transferase</keyword>
<comment type="function">
    <text>Conjugation of reduced glutathione to a wide number of exogenous and endogenous hydrophobic electrophiles.</text>
</comment>
<comment type="catalytic activity">
    <reaction>
        <text>RX + glutathione = an S-substituted glutathione + a halide anion + H(+)</text>
        <dbReference type="Rhea" id="RHEA:16437"/>
        <dbReference type="ChEBI" id="CHEBI:15378"/>
        <dbReference type="ChEBI" id="CHEBI:16042"/>
        <dbReference type="ChEBI" id="CHEBI:17792"/>
        <dbReference type="ChEBI" id="CHEBI:57925"/>
        <dbReference type="ChEBI" id="CHEBI:90779"/>
        <dbReference type="EC" id="2.5.1.18"/>
    </reaction>
</comment>
<comment type="subunit">
    <text evidence="1 4">Homodimer (By similarity). Interacts with PFKM isoform 2 and isoform 3 (via N-terminal testis-specific region) (PubMed:19889946).</text>
</comment>
<comment type="subcellular location">
    <subcellularLocation>
        <location>Cytoplasm</location>
    </subcellularLocation>
</comment>
<comment type="similarity">
    <text evidence="5">Belongs to the GST superfamily. Mu family.</text>
</comment>
<reference key="1">
    <citation type="journal article" date="1995" name="Mol. Reprod. Dev.">
        <title>Identification of a unique mu-class glutathione S-transferase in mouse spermatogenic cells.</title>
        <authorList>
            <person name="Fulcher K.D."/>
            <person name="Welch J.E."/>
            <person name="Klapper D.G."/>
            <person name="O'Brien D.A."/>
            <person name="Eddy E.M."/>
        </authorList>
    </citation>
    <scope>NUCLEOTIDE SEQUENCE [MRNA]</scope>
    <source>
        <strain>CD-1</strain>
        <tissue>Testis</tissue>
    </source>
</reference>
<reference key="2">
    <citation type="journal article" date="2005" name="Science">
        <title>The transcriptional landscape of the mammalian genome.</title>
        <authorList>
            <person name="Carninci P."/>
            <person name="Kasukawa T."/>
            <person name="Katayama S."/>
            <person name="Gough J."/>
            <person name="Frith M.C."/>
            <person name="Maeda N."/>
            <person name="Oyama R."/>
            <person name="Ravasi T."/>
            <person name="Lenhard B."/>
            <person name="Wells C."/>
            <person name="Kodzius R."/>
            <person name="Shimokawa K."/>
            <person name="Bajic V.B."/>
            <person name="Brenner S.E."/>
            <person name="Batalov S."/>
            <person name="Forrest A.R."/>
            <person name="Zavolan M."/>
            <person name="Davis M.J."/>
            <person name="Wilming L.G."/>
            <person name="Aidinis V."/>
            <person name="Allen J.E."/>
            <person name="Ambesi-Impiombato A."/>
            <person name="Apweiler R."/>
            <person name="Aturaliya R.N."/>
            <person name="Bailey T.L."/>
            <person name="Bansal M."/>
            <person name="Baxter L."/>
            <person name="Beisel K.W."/>
            <person name="Bersano T."/>
            <person name="Bono H."/>
            <person name="Chalk A.M."/>
            <person name="Chiu K.P."/>
            <person name="Choudhary V."/>
            <person name="Christoffels A."/>
            <person name="Clutterbuck D.R."/>
            <person name="Crowe M.L."/>
            <person name="Dalla E."/>
            <person name="Dalrymple B.P."/>
            <person name="de Bono B."/>
            <person name="Della Gatta G."/>
            <person name="di Bernardo D."/>
            <person name="Down T."/>
            <person name="Engstrom P."/>
            <person name="Fagiolini M."/>
            <person name="Faulkner G."/>
            <person name="Fletcher C.F."/>
            <person name="Fukushima T."/>
            <person name="Furuno M."/>
            <person name="Futaki S."/>
            <person name="Gariboldi M."/>
            <person name="Georgii-Hemming P."/>
            <person name="Gingeras T.R."/>
            <person name="Gojobori T."/>
            <person name="Green R.E."/>
            <person name="Gustincich S."/>
            <person name="Harbers M."/>
            <person name="Hayashi Y."/>
            <person name="Hensch T.K."/>
            <person name="Hirokawa N."/>
            <person name="Hill D."/>
            <person name="Huminiecki L."/>
            <person name="Iacono M."/>
            <person name="Ikeo K."/>
            <person name="Iwama A."/>
            <person name="Ishikawa T."/>
            <person name="Jakt M."/>
            <person name="Kanapin A."/>
            <person name="Katoh M."/>
            <person name="Kawasawa Y."/>
            <person name="Kelso J."/>
            <person name="Kitamura H."/>
            <person name="Kitano H."/>
            <person name="Kollias G."/>
            <person name="Krishnan S.P."/>
            <person name="Kruger A."/>
            <person name="Kummerfeld S.K."/>
            <person name="Kurochkin I.V."/>
            <person name="Lareau L.F."/>
            <person name="Lazarevic D."/>
            <person name="Lipovich L."/>
            <person name="Liu J."/>
            <person name="Liuni S."/>
            <person name="McWilliam S."/>
            <person name="Madan Babu M."/>
            <person name="Madera M."/>
            <person name="Marchionni L."/>
            <person name="Matsuda H."/>
            <person name="Matsuzawa S."/>
            <person name="Miki H."/>
            <person name="Mignone F."/>
            <person name="Miyake S."/>
            <person name="Morris K."/>
            <person name="Mottagui-Tabar S."/>
            <person name="Mulder N."/>
            <person name="Nakano N."/>
            <person name="Nakauchi H."/>
            <person name="Ng P."/>
            <person name="Nilsson R."/>
            <person name="Nishiguchi S."/>
            <person name="Nishikawa S."/>
            <person name="Nori F."/>
            <person name="Ohara O."/>
            <person name="Okazaki Y."/>
            <person name="Orlando V."/>
            <person name="Pang K.C."/>
            <person name="Pavan W.J."/>
            <person name="Pavesi G."/>
            <person name="Pesole G."/>
            <person name="Petrovsky N."/>
            <person name="Piazza S."/>
            <person name="Reed J."/>
            <person name="Reid J.F."/>
            <person name="Ring B.Z."/>
            <person name="Ringwald M."/>
            <person name="Rost B."/>
            <person name="Ruan Y."/>
            <person name="Salzberg S.L."/>
            <person name="Sandelin A."/>
            <person name="Schneider C."/>
            <person name="Schoenbach C."/>
            <person name="Sekiguchi K."/>
            <person name="Semple C.A."/>
            <person name="Seno S."/>
            <person name="Sessa L."/>
            <person name="Sheng Y."/>
            <person name="Shibata Y."/>
            <person name="Shimada H."/>
            <person name="Shimada K."/>
            <person name="Silva D."/>
            <person name="Sinclair B."/>
            <person name="Sperling S."/>
            <person name="Stupka E."/>
            <person name="Sugiura K."/>
            <person name="Sultana R."/>
            <person name="Takenaka Y."/>
            <person name="Taki K."/>
            <person name="Tammoja K."/>
            <person name="Tan S.L."/>
            <person name="Tang S."/>
            <person name="Taylor M.S."/>
            <person name="Tegner J."/>
            <person name="Teichmann S.A."/>
            <person name="Ueda H.R."/>
            <person name="van Nimwegen E."/>
            <person name="Verardo R."/>
            <person name="Wei C.L."/>
            <person name="Yagi K."/>
            <person name="Yamanishi H."/>
            <person name="Zabarovsky E."/>
            <person name="Zhu S."/>
            <person name="Zimmer A."/>
            <person name="Hide W."/>
            <person name="Bult C."/>
            <person name="Grimmond S.M."/>
            <person name="Teasdale R.D."/>
            <person name="Liu E.T."/>
            <person name="Brusic V."/>
            <person name="Quackenbush J."/>
            <person name="Wahlestedt C."/>
            <person name="Mattick J.S."/>
            <person name="Hume D.A."/>
            <person name="Kai C."/>
            <person name="Sasaki D."/>
            <person name="Tomaru Y."/>
            <person name="Fukuda S."/>
            <person name="Kanamori-Katayama M."/>
            <person name="Suzuki M."/>
            <person name="Aoki J."/>
            <person name="Arakawa T."/>
            <person name="Iida J."/>
            <person name="Imamura K."/>
            <person name="Itoh M."/>
            <person name="Kato T."/>
            <person name="Kawaji H."/>
            <person name="Kawagashira N."/>
            <person name="Kawashima T."/>
            <person name="Kojima M."/>
            <person name="Kondo S."/>
            <person name="Konno H."/>
            <person name="Nakano K."/>
            <person name="Ninomiya N."/>
            <person name="Nishio T."/>
            <person name="Okada M."/>
            <person name="Plessy C."/>
            <person name="Shibata K."/>
            <person name="Shiraki T."/>
            <person name="Suzuki S."/>
            <person name="Tagami M."/>
            <person name="Waki K."/>
            <person name="Watahiki A."/>
            <person name="Okamura-Oho Y."/>
            <person name="Suzuki H."/>
            <person name="Kawai J."/>
            <person name="Hayashizaki Y."/>
        </authorList>
    </citation>
    <scope>NUCLEOTIDE SEQUENCE [LARGE SCALE MRNA]</scope>
    <source>
        <strain>C57BL/6J</strain>
        <tissue>Hippocampus</tissue>
        <tissue>Kidney</tissue>
        <tissue>Testis</tissue>
    </source>
</reference>
<reference key="3">
    <citation type="journal article" date="2004" name="Genome Res.">
        <title>The status, quality, and expansion of the NIH full-length cDNA project: the Mammalian Gene Collection (MGC).</title>
        <authorList>
            <consortium name="The MGC Project Team"/>
        </authorList>
    </citation>
    <scope>NUCLEOTIDE SEQUENCE [LARGE SCALE MRNA]</scope>
    <source>
        <tissue>Mammary tumor</tissue>
    </source>
</reference>
<reference key="4">
    <citation type="submission" date="2009-01" db="UniProtKB">
        <authorList>
            <person name="Lubec G."/>
            <person name="Kang S.U."/>
            <person name="Sunyer B."/>
            <person name="Chen W.-Q."/>
        </authorList>
    </citation>
    <scope>PROTEIN SEQUENCE OF 22-34; 54-70; 71-81; 156-171 AND 197-205</scope>
    <scope>IDENTIFICATION BY MASS SPECTROMETRY</scope>
    <source>
        <strain>C57BL/6J</strain>
        <strain>OF1</strain>
        <tissue>Brain</tissue>
        <tissue>Hippocampus</tissue>
    </source>
</reference>
<reference key="5">
    <citation type="journal article" date="2010" name="Biol. Reprod.">
        <title>Molecular complex of three testis-specific isozymes associated with the mouse sperm fibrous sheath: hexokinase 1, phosphofructokinase M, and glutathione S-transferase mu class 5.</title>
        <authorList>
            <person name="Nakamura N."/>
            <person name="Mori C."/>
            <person name="Eddy E.M."/>
        </authorList>
    </citation>
    <scope>INTERACTION WITH PFKM</scope>
</reference>
<reference key="6">
    <citation type="journal article" date="2010" name="Cell">
        <title>A tissue-specific atlas of mouse protein phosphorylation and expression.</title>
        <authorList>
            <person name="Huttlin E.L."/>
            <person name="Jedrychowski M.P."/>
            <person name="Elias J.E."/>
            <person name="Goswami T."/>
            <person name="Rad R."/>
            <person name="Beausoleil S.A."/>
            <person name="Villen J."/>
            <person name="Haas W."/>
            <person name="Sowa M.E."/>
            <person name="Gygi S.P."/>
        </authorList>
    </citation>
    <scope>IDENTIFICATION BY MASS SPECTROMETRY [LARGE SCALE ANALYSIS]</scope>
    <source>
        <tissue>Brain</tissue>
        <tissue>Brown adipose tissue</tissue>
        <tissue>Heart</tissue>
        <tissue>Kidney</tissue>
        <tissue>Liver</tissue>
        <tissue>Lung</tissue>
        <tissue>Pancreas</tissue>
        <tissue>Spleen</tissue>
        <tissue>Testis</tissue>
    </source>
</reference>
<name>GSTM5_MOUSE</name>
<dbReference type="EC" id="2.5.1.18"/>
<dbReference type="EMBL" id="U24428">
    <property type="protein sequence ID" value="AAB04096.1"/>
    <property type="molecule type" value="mRNA"/>
</dbReference>
<dbReference type="EMBL" id="AK002750">
    <property type="protein sequence ID" value="BAB22327.1"/>
    <property type="molecule type" value="mRNA"/>
</dbReference>
<dbReference type="EMBL" id="AK019317">
    <property type="protein sequence ID" value="BAB31661.1"/>
    <property type="molecule type" value="mRNA"/>
</dbReference>
<dbReference type="EMBL" id="AK028098">
    <property type="protein sequence ID" value="BAC25746.1"/>
    <property type="molecule type" value="mRNA"/>
</dbReference>
<dbReference type="EMBL" id="BC008206">
    <property type="protein sequence ID" value="AAH08206.1"/>
    <property type="molecule type" value="mRNA"/>
</dbReference>
<dbReference type="CCDS" id="CCDS17741.1"/>
<dbReference type="RefSeq" id="NP_034490.1">
    <property type="nucleotide sequence ID" value="NM_010360.3"/>
</dbReference>
<dbReference type="SMR" id="P48774"/>
<dbReference type="BioGRID" id="200098">
    <property type="interactions" value="7"/>
</dbReference>
<dbReference type="FunCoup" id="P48774">
    <property type="interactions" value="330"/>
</dbReference>
<dbReference type="IntAct" id="P48774">
    <property type="interactions" value="4"/>
</dbReference>
<dbReference type="MINT" id="P48774"/>
<dbReference type="STRING" id="10090.ENSMUSP00000004134"/>
<dbReference type="GlyGen" id="P48774">
    <property type="glycosylation" value="1 site, 1 O-linked glycan (1 site)"/>
</dbReference>
<dbReference type="iPTMnet" id="P48774"/>
<dbReference type="PhosphoSitePlus" id="P48774"/>
<dbReference type="SwissPalm" id="P48774"/>
<dbReference type="jPOST" id="P48774"/>
<dbReference type="PaxDb" id="10090-ENSMUSP00000004134"/>
<dbReference type="PeptideAtlas" id="P48774"/>
<dbReference type="ProteomicsDB" id="271343"/>
<dbReference type="Pumba" id="P48774"/>
<dbReference type="Antibodypedia" id="33773">
    <property type="antibodies" value="220 antibodies from 31 providers"/>
</dbReference>
<dbReference type="DNASU" id="14866"/>
<dbReference type="Ensembl" id="ENSMUST00000004134.11">
    <property type="protein sequence ID" value="ENSMUSP00000004134.5"/>
    <property type="gene ID" value="ENSMUSG00000004032.11"/>
</dbReference>
<dbReference type="GeneID" id="14866"/>
<dbReference type="KEGG" id="mmu:14866"/>
<dbReference type="UCSC" id="uc008qxs.1">
    <property type="organism name" value="mouse"/>
</dbReference>
<dbReference type="AGR" id="MGI:1309466"/>
<dbReference type="CTD" id="2949"/>
<dbReference type="MGI" id="MGI:1309466">
    <property type="gene designation" value="Gstm5"/>
</dbReference>
<dbReference type="VEuPathDB" id="HostDB:ENSMUSG00000004032"/>
<dbReference type="eggNOG" id="KOG1695">
    <property type="taxonomic scope" value="Eukaryota"/>
</dbReference>
<dbReference type="GeneTree" id="ENSGT00940000157663"/>
<dbReference type="HOGENOM" id="CLU_039475_2_0_1"/>
<dbReference type="InParanoid" id="P48774"/>
<dbReference type="OMA" id="LCYTDFE"/>
<dbReference type="OrthoDB" id="4951845at2759"/>
<dbReference type="PhylomeDB" id="P48774"/>
<dbReference type="TreeFam" id="TF353040"/>
<dbReference type="Reactome" id="R-MMU-156590">
    <property type="pathway name" value="Glutathione conjugation"/>
</dbReference>
<dbReference type="SABIO-RK" id="P48774"/>
<dbReference type="BioGRID-ORCS" id="14866">
    <property type="hits" value="2 hits in 75 CRISPR screens"/>
</dbReference>
<dbReference type="ChiTaRS" id="Gstm5">
    <property type="organism name" value="mouse"/>
</dbReference>
<dbReference type="PRO" id="PR:P48774"/>
<dbReference type="Proteomes" id="UP000000589">
    <property type="component" value="Chromosome 3"/>
</dbReference>
<dbReference type="RNAct" id="P48774">
    <property type="molecule type" value="protein"/>
</dbReference>
<dbReference type="Bgee" id="ENSMUSG00000004032">
    <property type="expression patterns" value="Expressed in seminiferous tubule of testis and 293 other cell types or tissues"/>
</dbReference>
<dbReference type="ExpressionAtlas" id="P48774">
    <property type="expression patterns" value="baseline and differential"/>
</dbReference>
<dbReference type="GO" id="GO:0005829">
    <property type="term" value="C:cytosol"/>
    <property type="evidence" value="ECO:0000314"/>
    <property type="project" value="FlyBase"/>
</dbReference>
<dbReference type="GO" id="GO:0035686">
    <property type="term" value="C:sperm fibrous sheath"/>
    <property type="evidence" value="ECO:0000314"/>
    <property type="project" value="MGI"/>
</dbReference>
<dbReference type="GO" id="GO:0019899">
    <property type="term" value="F:enzyme binding"/>
    <property type="evidence" value="ECO:0007669"/>
    <property type="project" value="Ensembl"/>
</dbReference>
<dbReference type="GO" id="GO:0043295">
    <property type="term" value="F:glutathione binding"/>
    <property type="evidence" value="ECO:0007669"/>
    <property type="project" value="Ensembl"/>
</dbReference>
<dbReference type="GO" id="GO:0004364">
    <property type="term" value="F:glutathione transferase activity"/>
    <property type="evidence" value="ECO:0000314"/>
    <property type="project" value="MGI"/>
</dbReference>
<dbReference type="GO" id="GO:0042802">
    <property type="term" value="F:identical protein binding"/>
    <property type="evidence" value="ECO:0000353"/>
    <property type="project" value="MGI"/>
</dbReference>
<dbReference type="GO" id="GO:0042803">
    <property type="term" value="F:protein homodimerization activity"/>
    <property type="evidence" value="ECO:0007669"/>
    <property type="project" value="Ensembl"/>
</dbReference>
<dbReference type="GO" id="GO:0070458">
    <property type="term" value="P:cellular detoxification of nitrogen compound"/>
    <property type="evidence" value="ECO:0007669"/>
    <property type="project" value="Ensembl"/>
</dbReference>
<dbReference type="GO" id="GO:0006749">
    <property type="term" value="P:glutathione metabolic process"/>
    <property type="evidence" value="ECO:0000250"/>
    <property type="project" value="UniProtKB"/>
</dbReference>
<dbReference type="GO" id="GO:0018916">
    <property type="term" value="P:nitrobenzene metabolic process"/>
    <property type="evidence" value="ECO:0007669"/>
    <property type="project" value="Ensembl"/>
</dbReference>
<dbReference type="GO" id="GO:0043627">
    <property type="term" value="P:response to estrogen"/>
    <property type="evidence" value="ECO:0007669"/>
    <property type="project" value="Ensembl"/>
</dbReference>
<dbReference type="GO" id="GO:0042178">
    <property type="term" value="P:xenobiotic catabolic process"/>
    <property type="evidence" value="ECO:0007669"/>
    <property type="project" value="Ensembl"/>
</dbReference>
<dbReference type="CDD" id="cd03209">
    <property type="entry name" value="GST_C_Mu"/>
    <property type="match status" value="1"/>
</dbReference>
<dbReference type="CDD" id="cd03075">
    <property type="entry name" value="GST_N_Mu"/>
    <property type="match status" value="1"/>
</dbReference>
<dbReference type="FunFam" id="1.20.1050.10:FF:000003">
    <property type="entry name" value="Glutathione S-transferase 2"/>
    <property type="match status" value="1"/>
</dbReference>
<dbReference type="FunFam" id="3.40.30.10:FF:000603">
    <property type="entry name" value="Glutathione S-transferase Mu 1"/>
    <property type="match status" value="1"/>
</dbReference>
<dbReference type="Gene3D" id="1.20.1050.10">
    <property type="match status" value="1"/>
</dbReference>
<dbReference type="Gene3D" id="3.40.30.10">
    <property type="entry name" value="Glutaredoxin"/>
    <property type="match status" value="1"/>
</dbReference>
<dbReference type="InterPro" id="IPR010987">
    <property type="entry name" value="Glutathione-S-Trfase_C-like"/>
</dbReference>
<dbReference type="InterPro" id="IPR036282">
    <property type="entry name" value="Glutathione-S-Trfase_C_sf"/>
</dbReference>
<dbReference type="InterPro" id="IPR040079">
    <property type="entry name" value="Glutathione_S-Trfase"/>
</dbReference>
<dbReference type="InterPro" id="IPR004045">
    <property type="entry name" value="Glutathione_S-Trfase_N"/>
</dbReference>
<dbReference type="InterPro" id="IPR004046">
    <property type="entry name" value="GST_C"/>
</dbReference>
<dbReference type="InterPro" id="IPR003081">
    <property type="entry name" value="GST_mu"/>
</dbReference>
<dbReference type="InterPro" id="IPR050213">
    <property type="entry name" value="GST_superfamily"/>
</dbReference>
<dbReference type="InterPro" id="IPR036249">
    <property type="entry name" value="Thioredoxin-like_sf"/>
</dbReference>
<dbReference type="PANTHER" id="PTHR11571">
    <property type="entry name" value="GLUTATHIONE S-TRANSFERASE"/>
    <property type="match status" value="1"/>
</dbReference>
<dbReference type="PANTHER" id="PTHR11571:SF133">
    <property type="entry name" value="GLUTATHIONE S-TRANSFERASE MU 3"/>
    <property type="match status" value="1"/>
</dbReference>
<dbReference type="Pfam" id="PF00043">
    <property type="entry name" value="GST_C"/>
    <property type="match status" value="1"/>
</dbReference>
<dbReference type="Pfam" id="PF02798">
    <property type="entry name" value="GST_N"/>
    <property type="match status" value="1"/>
</dbReference>
<dbReference type="PRINTS" id="PR01267">
    <property type="entry name" value="GSTRNSFRASEM"/>
</dbReference>
<dbReference type="SFLD" id="SFLDG01205">
    <property type="entry name" value="AMPS.1"/>
    <property type="match status" value="1"/>
</dbReference>
<dbReference type="SFLD" id="SFLDS00019">
    <property type="entry name" value="Glutathione_Transferase_(cytos"/>
    <property type="match status" value="1"/>
</dbReference>
<dbReference type="SUPFAM" id="SSF47616">
    <property type="entry name" value="GST C-terminal domain-like"/>
    <property type="match status" value="1"/>
</dbReference>
<dbReference type="SUPFAM" id="SSF52833">
    <property type="entry name" value="Thioredoxin-like"/>
    <property type="match status" value="1"/>
</dbReference>
<dbReference type="PROSITE" id="PS50405">
    <property type="entry name" value="GST_CTER"/>
    <property type="match status" value="1"/>
</dbReference>
<dbReference type="PROSITE" id="PS50404">
    <property type="entry name" value="GST_NTER"/>
    <property type="match status" value="1"/>
</dbReference>
<accession>P48774</accession>
<accession>Q545W5</accession>
<protein>
    <recommendedName>
        <fullName>Glutathione S-transferase Mu 5</fullName>
        <ecNumber>2.5.1.18</ecNumber>
    </recommendedName>
    <alternativeName>
        <fullName>Fibrous sheath component 2</fullName>
        <shortName>Fsc2</shortName>
    </alternativeName>
    <alternativeName>
        <fullName>GST class-mu 5</fullName>
    </alternativeName>
</protein>
<sequence>MSSKSMVLGYWDIRGLAHAIRMLLEFTDTSYEEKRYICGEAPDYDRSQWLDVKFKLDLDFPNLPYLMDGKNKITQSNAILRYIARKHNMCGDTEEEKIRVDIMENQIMDFRMQLVRLCYNSNHENLKPQYLEQLPAQLKQFSLFLGKFTWFAGEKLTFVDFLTYDVLDQNRIFEPKCLDEFPNLKAFMCRFEALEKIAAFLQSDRFFKMPINNKMAKWGNKCLC</sequence>
<feature type="chain" id="PRO_0000185829" description="Glutathione S-transferase Mu 5">
    <location>
        <begin position="1"/>
        <end position="224"/>
    </location>
</feature>
<feature type="domain" description="GST N-terminal">
    <location>
        <begin position="4"/>
        <end position="91"/>
    </location>
</feature>
<feature type="domain" description="GST C-terminal">
    <location>
        <begin position="93"/>
        <end position="211"/>
    </location>
</feature>
<feature type="binding site" evidence="2">
    <location>
        <begin position="10"/>
        <end position="11"/>
    </location>
    <ligand>
        <name>glutathione</name>
        <dbReference type="ChEBI" id="CHEBI:57925"/>
    </ligand>
</feature>
<feature type="binding site" evidence="2">
    <location>
        <begin position="49"/>
        <end position="53"/>
    </location>
    <ligand>
        <name>glutathione</name>
        <dbReference type="ChEBI" id="CHEBI:57925"/>
    </ligand>
</feature>
<feature type="binding site" evidence="2">
    <location>
        <begin position="62"/>
        <end position="63"/>
    </location>
    <ligand>
        <name>glutathione</name>
        <dbReference type="ChEBI" id="CHEBI:57925"/>
    </ligand>
</feature>
<feature type="binding site" evidence="2">
    <location>
        <begin position="75"/>
        <end position="76"/>
    </location>
    <ligand>
        <name>glutathione</name>
        <dbReference type="ChEBI" id="CHEBI:57925"/>
    </ligand>
</feature>
<feature type="binding site" evidence="1">
    <location>
        <position position="119"/>
    </location>
    <ligand>
        <name>substrate</name>
    </ligand>
</feature>
<feature type="modified residue" description="Phosphoserine" evidence="3">
    <location>
        <position position="5"/>
    </location>
</feature>
<proteinExistence type="evidence at protein level"/>
<evidence type="ECO:0000250" key="1"/>
<evidence type="ECO:0000250" key="2">
    <source>
        <dbReference type="UniProtKB" id="P08515"/>
    </source>
</evidence>
<evidence type="ECO:0000250" key="3">
    <source>
        <dbReference type="UniProtKB" id="Q9Z1B2"/>
    </source>
</evidence>
<evidence type="ECO:0000269" key="4">
    <source>
    </source>
</evidence>
<evidence type="ECO:0000305" key="5"/>
<organism>
    <name type="scientific">Mus musculus</name>
    <name type="common">Mouse</name>
    <dbReference type="NCBI Taxonomy" id="10090"/>
    <lineage>
        <taxon>Eukaryota</taxon>
        <taxon>Metazoa</taxon>
        <taxon>Chordata</taxon>
        <taxon>Craniata</taxon>
        <taxon>Vertebrata</taxon>
        <taxon>Euteleostomi</taxon>
        <taxon>Mammalia</taxon>
        <taxon>Eutheria</taxon>
        <taxon>Euarchontoglires</taxon>
        <taxon>Glires</taxon>
        <taxon>Rodentia</taxon>
        <taxon>Myomorpha</taxon>
        <taxon>Muroidea</taxon>
        <taxon>Muridae</taxon>
        <taxon>Murinae</taxon>
        <taxon>Mus</taxon>
        <taxon>Mus</taxon>
    </lineage>
</organism>
<gene>
    <name type="primary">Gstm5</name>
    <name type="synonym">Fsc2</name>
    <name type="synonym">Gstm3</name>
</gene>